<keyword id="KW-0687">Ribonucleoprotein</keyword>
<keyword id="KW-0689">Ribosomal protein</keyword>
<keyword id="KW-0694">RNA-binding</keyword>
<keyword id="KW-0699">rRNA-binding</keyword>
<comment type="function">
    <text evidence="1">With S4 and S12 plays an important role in translational accuracy.</text>
</comment>
<comment type="function">
    <text evidence="1">Located at the back of the 30S subunit body where it stabilizes the conformation of the head with respect to the body.</text>
</comment>
<comment type="subunit">
    <text evidence="1">Part of the 30S ribosomal subunit. Contacts proteins S4 and S8.</text>
</comment>
<comment type="domain">
    <text>The N-terminal domain interacts with the head of the 30S subunit; the C-terminal domain interacts with the body and contacts protein S4. The interaction surface between S4 and S5 is involved in control of translational fidelity.</text>
</comment>
<comment type="similarity">
    <text evidence="1">Belongs to the universal ribosomal protein uS5 family.</text>
</comment>
<organism>
    <name type="scientific">Mesomycoplasma hyopneumoniae (strain J / ATCC 25934 / NCTC 10110)</name>
    <name type="common">Mycoplasma hyopneumoniae</name>
    <dbReference type="NCBI Taxonomy" id="262719"/>
    <lineage>
        <taxon>Bacteria</taxon>
        <taxon>Bacillati</taxon>
        <taxon>Mycoplasmatota</taxon>
        <taxon>Mycoplasmoidales</taxon>
        <taxon>Metamycoplasmataceae</taxon>
        <taxon>Mesomycoplasma</taxon>
    </lineage>
</organism>
<accession>Q4AAF7</accession>
<sequence>MDRKLENQKDLLNQDPKVELNSQSVAKNPLNSREVKPIQRRRPLRKNSRDKNSKPEFEERVIAIHRVVKVVKGGRRFSFSAFAVVGNKKGRVGFGHGKANEVQDAVKKAIKDAQNRLVSVPIYRKSTVPHEIAVKYLASKILIKPAPRGKGIVASNTVRAVVELAGYTDIYTKTYGSRTKINVVRATLKALLKLRTINQVAELRDLSPQQAQAQKV</sequence>
<protein>
    <recommendedName>
        <fullName evidence="1">Small ribosomal subunit protein uS5</fullName>
    </recommendedName>
    <alternativeName>
        <fullName evidence="3">30S ribosomal protein S5</fullName>
    </alternativeName>
</protein>
<evidence type="ECO:0000255" key="1">
    <source>
        <dbReference type="HAMAP-Rule" id="MF_01307"/>
    </source>
</evidence>
<evidence type="ECO:0000256" key="2">
    <source>
        <dbReference type="SAM" id="MobiDB-lite"/>
    </source>
</evidence>
<evidence type="ECO:0000305" key="3"/>
<feature type="chain" id="PRO_0000230350" description="Small ribosomal subunit protein uS5">
    <location>
        <begin position="1"/>
        <end position="216"/>
    </location>
</feature>
<feature type="domain" description="S5 DRBM" evidence="1">
    <location>
        <begin position="57"/>
        <end position="120"/>
    </location>
</feature>
<feature type="region of interest" description="Disordered" evidence="2">
    <location>
        <begin position="1"/>
        <end position="55"/>
    </location>
</feature>
<feature type="compositionally biased region" description="Polar residues" evidence="2">
    <location>
        <begin position="20"/>
        <end position="31"/>
    </location>
</feature>
<dbReference type="EMBL" id="AE017243">
    <property type="protein sequence ID" value="AAZ44264.1"/>
    <property type="molecule type" value="Genomic_DNA"/>
</dbReference>
<dbReference type="RefSeq" id="WP_011206042.1">
    <property type="nucleotide sequence ID" value="NC_007295.1"/>
</dbReference>
<dbReference type="SMR" id="Q4AAF7"/>
<dbReference type="GeneID" id="41334476"/>
<dbReference type="KEGG" id="mhj:MHJ_0173"/>
<dbReference type="eggNOG" id="COG0098">
    <property type="taxonomic scope" value="Bacteria"/>
</dbReference>
<dbReference type="HOGENOM" id="CLU_065898_2_1_14"/>
<dbReference type="OrthoDB" id="9809045at2"/>
<dbReference type="Proteomes" id="UP000000548">
    <property type="component" value="Chromosome"/>
</dbReference>
<dbReference type="GO" id="GO:0015935">
    <property type="term" value="C:small ribosomal subunit"/>
    <property type="evidence" value="ECO:0007669"/>
    <property type="project" value="InterPro"/>
</dbReference>
<dbReference type="GO" id="GO:0019843">
    <property type="term" value="F:rRNA binding"/>
    <property type="evidence" value="ECO:0007669"/>
    <property type="project" value="UniProtKB-UniRule"/>
</dbReference>
<dbReference type="GO" id="GO:0003735">
    <property type="term" value="F:structural constituent of ribosome"/>
    <property type="evidence" value="ECO:0007669"/>
    <property type="project" value="InterPro"/>
</dbReference>
<dbReference type="GO" id="GO:0006412">
    <property type="term" value="P:translation"/>
    <property type="evidence" value="ECO:0007669"/>
    <property type="project" value="UniProtKB-UniRule"/>
</dbReference>
<dbReference type="FunFam" id="3.30.160.20:FF:000001">
    <property type="entry name" value="30S ribosomal protein S5"/>
    <property type="match status" value="1"/>
</dbReference>
<dbReference type="FunFam" id="3.30.230.10:FF:000002">
    <property type="entry name" value="30S ribosomal protein S5"/>
    <property type="match status" value="1"/>
</dbReference>
<dbReference type="Gene3D" id="3.30.160.20">
    <property type="match status" value="1"/>
</dbReference>
<dbReference type="Gene3D" id="3.30.230.10">
    <property type="match status" value="1"/>
</dbReference>
<dbReference type="HAMAP" id="MF_01307_B">
    <property type="entry name" value="Ribosomal_uS5_B"/>
    <property type="match status" value="1"/>
</dbReference>
<dbReference type="InterPro" id="IPR020568">
    <property type="entry name" value="Ribosomal_Su5_D2-typ_SF"/>
</dbReference>
<dbReference type="InterPro" id="IPR000851">
    <property type="entry name" value="Ribosomal_uS5"/>
</dbReference>
<dbReference type="InterPro" id="IPR005712">
    <property type="entry name" value="Ribosomal_uS5_bac-type"/>
</dbReference>
<dbReference type="InterPro" id="IPR005324">
    <property type="entry name" value="Ribosomal_uS5_C"/>
</dbReference>
<dbReference type="InterPro" id="IPR013810">
    <property type="entry name" value="Ribosomal_uS5_N"/>
</dbReference>
<dbReference type="InterPro" id="IPR018192">
    <property type="entry name" value="Ribosomal_uS5_N_CS"/>
</dbReference>
<dbReference type="InterPro" id="IPR014721">
    <property type="entry name" value="Ribsml_uS5_D2-typ_fold_subgr"/>
</dbReference>
<dbReference type="NCBIfam" id="TIGR01021">
    <property type="entry name" value="rpsE_bact"/>
    <property type="match status" value="1"/>
</dbReference>
<dbReference type="PANTHER" id="PTHR48277">
    <property type="entry name" value="MITOCHONDRIAL RIBOSOMAL PROTEIN S5"/>
    <property type="match status" value="1"/>
</dbReference>
<dbReference type="PANTHER" id="PTHR48277:SF1">
    <property type="entry name" value="MITOCHONDRIAL RIBOSOMAL PROTEIN S5"/>
    <property type="match status" value="1"/>
</dbReference>
<dbReference type="Pfam" id="PF00333">
    <property type="entry name" value="Ribosomal_S5"/>
    <property type="match status" value="1"/>
</dbReference>
<dbReference type="Pfam" id="PF03719">
    <property type="entry name" value="Ribosomal_S5_C"/>
    <property type="match status" value="1"/>
</dbReference>
<dbReference type="SUPFAM" id="SSF54768">
    <property type="entry name" value="dsRNA-binding domain-like"/>
    <property type="match status" value="1"/>
</dbReference>
<dbReference type="SUPFAM" id="SSF54211">
    <property type="entry name" value="Ribosomal protein S5 domain 2-like"/>
    <property type="match status" value="1"/>
</dbReference>
<dbReference type="PROSITE" id="PS00585">
    <property type="entry name" value="RIBOSOMAL_S5"/>
    <property type="match status" value="1"/>
</dbReference>
<dbReference type="PROSITE" id="PS50881">
    <property type="entry name" value="S5_DSRBD"/>
    <property type="match status" value="1"/>
</dbReference>
<gene>
    <name evidence="1" type="primary">rpsE</name>
    <name type="ordered locus">MHJ_0173</name>
</gene>
<reference key="1">
    <citation type="journal article" date="2005" name="J. Bacteriol.">
        <title>Swine and poultry pathogens: the complete genome sequences of two strains of Mycoplasma hyopneumoniae and a strain of Mycoplasma synoviae.</title>
        <authorList>
            <person name="Vasconcelos A.T.R."/>
            <person name="Ferreira H.B."/>
            <person name="Bizarro C.V."/>
            <person name="Bonatto S.L."/>
            <person name="Carvalho M.O."/>
            <person name="Pinto P.M."/>
            <person name="Almeida D.F."/>
            <person name="Almeida L.G.P."/>
            <person name="Almeida R."/>
            <person name="Alves-Junior L."/>
            <person name="Assuncao E.N."/>
            <person name="Azevedo V.A.C."/>
            <person name="Bogo M.R."/>
            <person name="Brigido M.M."/>
            <person name="Brocchi M."/>
            <person name="Burity H.A."/>
            <person name="Camargo A.A."/>
            <person name="Camargo S.S."/>
            <person name="Carepo M.S."/>
            <person name="Carraro D.M."/>
            <person name="de Mattos Cascardo J.C."/>
            <person name="Castro L.A."/>
            <person name="Cavalcanti G."/>
            <person name="Chemale G."/>
            <person name="Collevatti R.G."/>
            <person name="Cunha C.W."/>
            <person name="Dallagiovanna B."/>
            <person name="Dambros B.P."/>
            <person name="Dellagostin O.A."/>
            <person name="Falcao C."/>
            <person name="Fantinatti-Garboggini F."/>
            <person name="Felipe M.S.S."/>
            <person name="Fiorentin L."/>
            <person name="Franco G.R."/>
            <person name="Freitas N.S.A."/>
            <person name="Frias D."/>
            <person name="Grangeiro T.B."/>
            <person name="Grisard E.C."/>
            <person name="Guimaraes C.T."/>
            <person name="Hungria M."/>
            <person name="Jardim S.N."/>
            <person name="Krieger M.A."/>
            <person name="Laurino J.P."/>
            <person name="Lima L.F.A."/>
            <person name="Lopes M.I."/>
            <person name="Loreto E.L.S."/>
            <person name="Madeira H.M.F."/>
            <person name="Manfio G.P."/>
            <person name="Maranhao A.Q."/>
            <person name="Martinkovics C.T."/>
            <person name="Medeiros S.R.B."/>
            <person name="Moreira M.A.M."/>
            <person name="Neiva M."/>
            <person name="Ramalho-Neto C.E."/>
            <person name="Nicolas M.F."/>
            <person name="Oliveira S.C."/>
            <person name="Paixao R.F.C."/>
            <person name="Pedrosa F.O."/>
            <person name="Pena S.D.J."/>
            <person name="Pereira M."/>
            <person name="Pereira-Ferrari L."/>
            <person name="Piffer I."/>
            <person name="Pinto L.S."/>
            <person name="Potrich D.P."/>
            <person name="Salim A.C.M."/>
            <person name="Santos F.R."/>
            <person name="Schmitt R."/>
            <person name="Schneider M.P.C."/>
            <person name="Schrank A."/>
            <person name="Schrank I.S."/>
            <person name="Schuck A.F."/>
            <person name="Seuanez H.N."/>
            <person name="Silva D.W."/>
            <person name="Silva R."/>
            <person name="Silva S.C."/>
            <person name="Soares C.M.A."/>
            <person name="Souza K.R.L."/>
            <person name="Souza R.C."/>
            <person name="Staats C.C."/>
            <person name="Steffens M.B.R."/>
            <person name="Teixeira S.M.R."/>
            <person name="Urmenyi T.P."/>
            <person name="Vainstein M.H."/>
            <person name="Zuccherato L.W."/>
            <person name="Simpson A.J.G."/>
            <person name="Zaha A."/>
        </authorList>
    </citation>
    <scope>NUCLEOTIDE SEQUENCE [LARGE SCALE GENOMIC DNA]</scope>
    <source>
        <strain>J / ATCC 25934 / NCTC 10110</strain>
    </source>
</reference>
<name>RS5_MESHJ</name>
<proteinExistence type="inferred from homology"/>